<keyword id="KW-1185">Reference proteome</keyword>
<gene>
    <name type="ordered locus">Cpha266_2541</name>
</gene>
<accession>A1BJF2</accession>
<comment type="similarity">
    <text evidence="1">Belongs to the CinA family.</text>
</comment>
<dbReference type="EMBL" id="CP000492">
    <property type="protein sequence ID" value="ABL66529.1"/>
    <property type="molecule type" value="Genomic_DNA"/>
</dbReference>
<dbReference type="RefSeq" id="WP_011746306.1">
    <property type="nucleotide sequence ID" value="NC_008639.1"/>
</dbReference>
<dbReference type="SMR" id="A1BJF2"/>
<dbReference type="STRING" id="290317.Cpha266_2541"/>
<dbReference type="KEGG" id="cph:Cpha266_2541"/>
<dbReference type="eggNOG" id="COG1058">
    <property type="taxonomic scope" value="Bacteria"/>
</dbReference>
<dbReference type="eggNOG" id="COG1546">
    <property type="taxonomic scope" value="Bacteria"/>
</dbReference>
<dbReference type="HOGENOM" id="CLU_030805_9_3_10"/>
<dbReference type="OrthoDB" id="9801454at2"/>
<dbReference type="Proteomes" id="UP000008701">
    <property type="component" value="Chromosome"/>
</dbReference>
<dbReference type="CDD" id="cd00885">
    <property type="entry name" value="cinA"/>
    <property type="match status" value="1"/>
</dbReference>
<dbReference type="Gene3D" id="3.90.950.20">
    <property type="entry name" value="CinA-like"/>
    <property type="match status" value="1"/>
</dbReference>
<dbReference type="Gene3D" id="3.40.980.10">
    <property type="entry name" value="MoaB/Mog-like domain"/>
    <property type="match status" value="1"/>
</dbReference>
<dbReference type="HAMAP" id="MF_00226_B">
    <property type="entry name" value="CinA_B"/>
    <property type="match status" value="1"/>
</dbReference>
<dbReference type="InterPro" id="IPR050101">
    <property type="entry name" value="CinA"/>
</dbReference>
<dbReference type="InterPro" id="IPR036653">
    <property type="entry name" value="CinA-like_C"/>
</dbReference>
<dbReference type="InterPro" id="IPR008136">
    <property type="entry name" value="CinA_C"/>
</dbReference>
<dbReference type="InterPro" id="IPR041424">
    <property type="entry name" value="CinA_KH"/>
</dbReference>
<dbReference type="InterPro" id="IPR008135">
    <property type="entry name" value="Competence-induced_CinA"/>
</dbReference>
<dbReference type="InterPro" id="IPR036425">
    <property type="entry name" value="MoaB/Mog-like_dom_sf"/>
</dbReference>
<dbReference type="InterPro" id="IPR001453">
    <property type="entry name" value="MoaB/Mog_dom"/>
</dbReference>
<dbReference type="NCBIfam" id="TIGR00200">
    <property type="entry name" value="cinA_nterm"/>
    <property type="match status" value="1"/>
</dbReference>
<dbReference type="NCBIfam" id="TIGR00177">
    <property type="entry name" value="molyb_syn"/>
    <property type="match status" value="1"/>
</dbReference>
<dbReference type="NCBIfam" id="TIGR00199">
    <property type="entry name" value="PncC_domain"/>
    <property type="match status" value="1"/>
</dbReference>
<dbReference type="NCBIfam" id="NF001813">
    <property type="entry name" value="PRK00549.1"/>
    <property type="match status" value="1"/>
</dbReference>
<dbReference type="PANTHER" id="PTHR13939">
    <property type="entry name" value="NICOTINAMIDE-NUCLEOTIDE AMIDOHYDROLASE PNCC"/>
    <property type="match status" value="1"/>
</dbReference>
<dbReference type="PANTHER" id="PTHR13939:SF0">
    <property type="entry name" value="NMN AMIDOHYDROLASE-LIKE PROTEIN YFAY"/>
    <property type="match status" value="1"/>
</dbReference>
<dbReference type="Pfam" id="PF02464">
    <property type="entry name" value="CinA"/>
    <property type="match status" value="1"/>
</dbReference>
<dbReference type="Pfam" id="PF18146">
    <property type="entry name" value="CinA_KH"/>
    <property type="match status" value="1"/>
</dbReference>
<dbReference type="Pfam" id="PF00994">
    <property type="entry name" value="MoCF_biosynth"/>
    <property type="match status" value="1"/>
</dbReference>
<dbReference type="PIRSF" id="PIRSF006728">
    <property type="entry name" value="CinA"/>
    <property type="match status" value="1"/>
</dbReference>
<dbReference type="SMART" id="SM00852">
    <property type="entry name" value="MoCF_biosynth"/>
    <property type="match status" value="1"/>
</dbReference>
<dbReference type="SUPFAM" id="SSF142433">
    <property type="entry name" value="CinA-like"/>
    <property type="match status" value="1"/>
</dbReference>
<dbReference type="SUPFAM" id="SSF53218">
    <property type="entry name" value="Molybdenum cofactor biosynthesis proteins"/>
    <property type="match status" value="1"/>
</dbReference>
<feature type="chain" id="PRO_0000336499" description="CinA-like protein">
    <location>
        <begin position="1"/>
        <end position="423"/>
    </location>
</feature>
<protein>
    <recommendedName>
        <fullName evidence="1">CinA-like protein</fullName>
    </recommendedName>
</protein>
<reference key="1">
    <citation type="submission" date="2006-12" db="EMBL/GenBank/DDBJ databases">
        <title>Complete sequence of Chlorobium phaeobacteroides DSM 266.</title>
        <authorList>
            <consortium name="US DOE Joint Genome Institute"/>
            <person name="Copeland A."/>
            <person name="Lucas S."/>
            <person name="Lapidus A."/>
            <person name="Barry K."/>
            <person name="Detter J.C."/>
            <person name="Glavina del Rio T."/>
            <person name="Hammon N."/>
            <person name="Israni S."/>
            <person name="Pitluck S."/>
            <person name="Goltsman E."/>
            <person name="Schmutz J."/>
            <person name="Larimer F."/>
            <person name="Land M."/>
            <person name="Hauser L."/>
            <person name="Mikhailova N."/>
            <person name="Li T."/>
            <person name="Overmann J."/>
            <person name="Bryant D.A."/>
            <person name="Richardson P."/>
        </authorList>
    </citation>
    <scope>NUCLEOTIDE SEQUENCE [LARGE SCALE GENOMIC DNA]</scope>
    <source>
        <strain>DSM 266 / SMG 266 / 2430</strain>
    </source>
</reference>
<organism>
    <name type="scientific">Chlorobium phaeobacteroides (strain DSM 266 / SMG 266 / 2430)</name>
    <dbReference type="NCBI Taxonomy" id="290317"/>
    <lineage>
        <taxon>Bacteria</taxon>
        <taxon>Pseudomonadati</taxon>
        <taxon>Chlorobiota</taxon>
        <taxon>Chlorobiia</taxon>
        <taxon>Chlorobiales</taxon>
        <taxon>Chlorobiaceae</taxon>
        <taxon>Chlorobium/Pelodictyon group</taxon>
        <taxon>Chlorobium</taxon>
    </lineage>
</organism>
<sequence>MVIRSEIVSIGDELLKGQRVNTNASFIASALSDIGIPVVRVVACGDAEEEIMSALRESLERADIVLVTGGLGPTRDDRTLKAAAGLLQRDLKLSPAAFDALQEWFVSRGRKMPEAMRDQARIIEGSLLVPNTTGTAAGMIADAGERFMNHTLVLMPGVPSEMKAMMNQTVIPYFATSSKMVIRHTPVRTLGIGETLLAELVVEVEDHMPEGTTLAYLPHTAGVDLMVSTIGSSVEAVERDNRGVVDALLARTGRYVYATEDVTIEETVGRLLAQRGMTIAVAESCTGGLLASRLTDIAGSSRYFLEGVVVYSNKAKEHFLGVKFETLQLYGAVSPEVAAEMAEGCLFVSGADIAVSTTGIAGPSNESEDKPVGMLCLGVARKEPGGEVSVSTRTLFYHGTREQNKLRFSQAALCEVWESLQDR</sequence>
<evidence type="ECO:0000255" key="1">
    <source>
        <dbReference type="HAMAP-Rule" id="MF_00226"/>
    </source>
</evidence>
<name>CINAL_CHLPD</name>
<proteinExistence type="inferred from homology"/>